<dbReference type="EMBL" id="CH379070">
    <property type="protein sequence ID" value="EAL30282.1"/>
    <property type="status" value="ALT_SEQ"/>
    <property type="molecule type" value="Genomic_DNA"/>
</dbReference>
<dbReference type="RefSeq" id="XP_001352782.1">
    <property type="nucleotide sequence ID" value="XM_001352746.3"/>
</dbReference>
<dbReference type="RefSeq" id="XP_015043852.1">
    <property type="nucleotide sequence ID" value="XM_015188366.1"/>
</dbReference>
<dbReference type="SMR" id="Q29DY1"/>
<dbReference type="FunCoup" id="Q29DY1">
    <property type="interactions" value="16"/>
</dbReference>
<dbReference type="STRING" id="46245.Q29DY1"/>
<dbReference type="EnsemblMetazoa" id="FBtr0287799">
    <property type="protein sequence ID" value="FBpp0286237"/>
    <property type="gene ID" value="FBgn0080239"/>
</dbReference>
<dbReference type="EnsemblMetazoa" id="FBtr0377361">
    <property type="protein sequence ID" value="FBpp0338404"/>
    <property type="gene ID" value="FBgn0080239"/>
</dbReference>
<dbReference type="GeneID" id="4812180"/>
<dbReference type="KEGG" id="dpo:4812180"/>
<dbReference type="CTD" id="39332"/>
<dbReference type="eggNOG" id="KOG4280">
    <property type="taxonomic scope" value="Eukaryota"/>
</dbReference>
<dbReference type="HOGENOM" id="CLU_001485_22_4_1"/>
<dbReference type="InParanoid" id="Q29DY1"/>
<dbReference type="OMA" id="DMIRVMK"/>
<dbReference type="PhylomeDB" id="Q29DY1"/>
<dbReference type="Proteomes" id="UP000001819">
    <property type="component" value="Chromosome X"/>
</dbReference>
<dbReference type="Bgee" id="FBgn0080239">
    <property type="expression patterns" value="Expressed in insect adult head and 2 other cell types or tissues"/>
</dbReference>
<dbReference type="ExpressionAtlas" id="Q29DY1">
    <property type="expression patterns" value="baseline"/>
</dbReference>
<dbReference type="GO" id="GO:0005737">
    <property type="term" value="C:cytoplasm"/>
    <property type="evidence" value="ECO:0007669"/>
    <property type="project" value="UniProtKB-KW"/>
</dbReference>
<dbReference type="GO" id="GO:0005874">
    <property type="term" value="C:microtubule"/>
    <property type="evidence" value="ECO:0007669"/>
    <property type="project" value="UniProtKB-KW"/>
</dbReference>
<dbReference type="GO" id="GO:0005875">
    <property type="term" value="C:microtubule associated complex"/>
    <property type="evidence" value="ECO:0000250"/>
    <property type="project" value="UniProtKB"/>
</dbReference>
<dbReference type="GO" id="GO:0005524">
    <property type="term" value="F:ATP binding"/>
    <property type="evidence" value="ECO:0007669"/>
    <property type="project" value="UniProtKB-KW"/>
</dbReference>
<dbReference type="GO" id="GO:0003774">
    <property type="term" value="F:cytoskeletal motor activity"/>
    <property type="evidence" value="ECO:0000250"/>
    <property type="project" value="UniProtKB"/>
</dbReference>
<dbReference type="GO" id="GO:0008017">
    <property type="term" value="F:microtubule binding"/>
    <property type="evidence" value="ECO:0007669"/>
    <property type="project" value="InterPro"/>
</dbReference>
<dbReference type="GO" id="GO:0003777">
    <property type="term" value="F:microtubule motor activity"/>
    <property type="evidence" value="ECO:0007669"/>
    <property type="project" value="InterPro"/>
</dbReference>
<dbReference type="GO" id="GO:0007018">
    <property type="term" value="P:microtubule-based movement"/>
    <property type="evidence" value="ECO:0000250"/>
    <property type="project" value="UniProtKB"/>
</dbReference>
<dbReference type="FunFam" id="3.40.850.10:FF:000029">
    <property type="entry name" value="Kinesin-like protein KIF17"/>
    <property type="match status" value="1"/>
</dbReference>
<dbReference type="Gene3D" id="3.40.850.10">
    <property type="entry name" value="Kinesin motor domain"/>
    <property type="match status" value="1"/>
</dbReference>
<dbReference type="InterPro" id="IPR027640">
    <property type="entry name" value="Kinesin-like_fam"/>
</dbReference>
<dbReference type="InterPro" id="IPR019821">
    <property type="entry name" value="Kinesin_motor_CS"/>
</dbReference>
<dbReference type="InterPro" id="IPR001752">
    <property type="entry name" value="Kinesin_motor_dom"/>
</dbReference>
<dbReference type="InterPro" id="IPR036961">
    <property type="entry name" value="Kinesin_motor_dom_sf"/>
</dbReference>
<dbReference type="InterPro" id="IPR027417">
    <property type="entry name" value="P-loop_NTPase"/>
</dbReference>
<dbReference type="PANTHER" id="PTHR47969">
    <property type="entry name" value="CHROMOSOME-ASSOCIATED KINESIN KIF4A-RELATED"/>
    <property type="match status" value="1"/>
</dbReference>
<dbReference type="PANTHER" id="PTHR47969:SF21">
    <property type="entry name" value="KINESIN-LIKE PROTEIN"/>
    <property type="match status" value="1"/>
</dbReference>
<dbReference type="Pfam" id="PF00225">
    <property type="entry name" value="Kinesin"/>
    <property type="match status" value="1"/>
</dbReference>
<dbReference type="PRINTS" id="PR00380">
    <property type="entry name" value="KINESINHEAVY"/>
</dbReference>
<dbReference type="SMART" id="SM00129">
    <property type="entry name" value="KISc"/>
    <property type="match status" value="1"/>
</dbReference>
<dbReference type="SUPFAM" id="SSF52540">
    <property type="entry name" value="P-loop containing nucleoside triphosphate hydrolases"/>
    <property type="match status" value="1"/>
</dbReference>
<dbReference type="PROSITE" id="PS00411">
    <property type="entry name" value="KINESIN_MOTOR_1"/>
    <property type="match status" value="1"/>
</dbReference>
<dbReference type="PROSITE" id="PS50067">
    <property type="entry name" value="KINESIN_MOTOR_2"/>
    <property type="match status" value="1"/>
</dbReference>
<organism>
    <name type="scientific">Drosophila pseudoobscura pseudoobscura</name>
    <name type="common">Fruit fly</name>
    <dbReference type="NCBI Taxonomy" id="46245"/>
    <lineage>
        <taxon>Eukaryota</taxon>
        <taxon>Metazoa</taxon>
        <taxon>Ecdysozoa</taxon>
        <taxon>Arthropoda</taxon>
        <taxon>Hexapoda</taxon>
        <taxon>Insecta</taxon>
        <taxon>Pterygota</taxon>
        <taxon>Neoptera</taxon>
        <taxon>Endopterygota</taxon>
        <taxon>Diptera</taxon>
        <taxon>Brachycera</taxon>
        <taxon>Muscomorpha</taxon>
        <taxon>Ephydroidea</taxon>
        <taxon>Drosophilidae</taxon>
        <taxon>Drosophila</taxon>
        <taxon>Sophophora</taxon>
    </lineage>
</organism>
<reference evidence="6" key="1">
    <citation type="journal article" date="2005" name="Genome Res.">
        <title>Comparative genome sequencing of Drosophila pseudoobscura: chromosomal, gene, and cis-element evolution.</title>
        <authorList>
            <person name="Richards S."/>
            <person name="Liu Y."/>
            <person name="Bettencourt B.R."/>
            <person name="Hradecky P."/>
            <person name="Letovsky S."/>
            <person name="Nielsen R."/>
            <person name="Thornton K."/>
            <person name="Hubisz M.J."/>
            <person name="Chen R."/>
            <person name="Meisel R.P."/>
            <person name="Couronne O."/>
            <person name="Hua S."/>
            <person name="Smith M.A."/>
            <person name="Zhang P."/>
            <person name="Liu J."/>
            <person name="Bussemaker H.J."/>
            <person name="van Batenburg M.F."/>
            <person name="Howells S.L."/>
            <person name="Scherer S.E."/>
            <person name="Sodergren E."/>
            <person name="Matthews B.B."/>
            <person name="Crosby M.A."/>
            <person name="Schroeder A.J."/>
            <person name="Ortiz-Barrientos D."/>
            <person name="Rives C.M."/>
            <person name="Metzker M.L."/>
            <person name="Muzny D.M."/>
            <person name="Scott G."/>
            <person name="Steffen D."/>
            <person name="Wheeler D.A."/>
            <person name="Worley K.C."/>
            <person name="Havlak P."/>
            <person name="Durbin K.J."/>
            <person name="Egan A."/>
            <person name="Gill R."/>
            <person name="Hume J."/>
            <person name="Morgan M.B."/>
            <person name="Miner G."/>
            <person name="Hamilton C."/>
            <person name="Huang Y."/>
            <person name="Waldron L."/>
            <person name="Verduzco D."/>
            <person name="Clerc-Blankenburg K.P."/>
            <person name="Dubchak I."/>
            <person name="Noor M.A.F."/>
            <person name="Anderson W."/>
            <person name="White K.P."/>
            <person name="Clark A.G."/>
            <person name="Schaeffer S.W."/>
            <person name="Gelbart W.M."/>
            <person name="Weinstock G.M."/>
            <person name="Gibbs R.A."/>
        </authorList>
    </citation>
    <scope>NUCLEOTIDE SEQUENCE [LARGE SCALE GENOMIC DNA]</scope>
    <source>
        <strain>MV2-25 / Tucson 14011-0121.94</strain>
    </source>
</reference>
<feature type="chain" id="PRO_0000270579" description="Kinesin-like protein Klp68D">
    <location>
        <begin position="1"/>
        <end position="797"/>
    </location>
</feature>
<feature type="domain" description="Kinesin motor" evidence="3">
    <location>
        <begin position="19"/>
        <end position="344"/>
    </location>
</feature>
<feature type="region of interest" description="Disordered" evidence="4">
    <location>
        <begin position="371"/>
        <end position="450"/>
    </location>
</feature>
<feature type="region of interest" description="Disordered" evidence="4">
    <location>
        <begin position="610"/>
        <end position="656"/>
    </location>
</feature>
<feature type="region of interest" description="Disordered" evidence="4">
    <location>
        <begin position="722"/>
        <end position="797"/>
    </location>
</feature>
<feature type="coiled-coil region" evidence="2">
    <location>
        <begin position="350"/>
        <end position="384"/>
    </location>
</feature>
<feature type="coiled-coil region" evidence="2">
    <location>
        <begin position="432"/>
        <end position="580"/>
    </location>
</feature>
<feature type="compositionally biased region" description="Basic residues" evidence="4">
    <location>
        <begin position="386"/>
        <end position="396"/>
    </location>
</feature>
<feature type="compositionally biased region" description="Acidic residues" evidence="4">
    <location>
        <begin position="417"/>
        <end position="431"/>
    </location>
</feature>
<feature type="compositionally biased region" description="Basic and acidic residues" evidence="4">
    <location>
        <begin position="432"/>
        <end position="450"/>
    </location>
</feature>
<feature type="compositionally biased region" description="Basic residues" evidence="4">
    <location>
        <begin position="626"/>
        <end position="638"/>
    </location>
</feature>
<feature type="compositionally biased region" description="Low complexity" evidence="4">
    <location>
        <begin position="782"/>
        <end position="791"/>
    </location>
</feature>
<feature type="binding site" evidence="3">
    <location>
        <begin position="106"/>
        <end position="113"/>
    </location>
    <ligand>
        <name>ATP</name>
        <dbReference type="ChEBI" id="CHEBI:30616"/>
    </ligand>
</feature>
<protein>
    <recommendedName>
        <fullName>Kinesin-like protein Klp68D</fullName>
    </recommendedName>
</protein>
<sequence length="797" mass="89225">MSAKSRRPGTASSQTPNECVQVVVRCRPMSNRERSEGSPEVVNVYPNRGVVELQNVVDANKEQRKVFTYDAAYDASASQTTLYHEVVFPLVSSVLEGFNGCIFAYGQTGTGKTFTMEGVRGNDDLMGIIPRTFEQIWLHINRTENFQFLVDVSYLEIYMEELRDLLKPNSKHLEVRERGSGVYVPNLHAINCKSVDDMIRVMKVGNKNRTVGFTNMNEHSSRSHAIFMIKIEMCDTETNTIKVGKLNLIDLAGSERQSKTGASAERLKEASKINLALSSLGNVISALAESSPHVPYRDSKLTRLLQDSLGGNSKTIMIANIGPSNYNYNETLTTLRYASRAKSIQNQPIKNEDPQDAKLKEYQEEIERLKRLIAPQQQQRSEKQGTIKKQRVKKPKKEPISQELIGSALQASSADLQVDEDRDSDGDGAESESDKENEAEVAKSNEELERERVENAKLAAKLAELEGQLVRGGKNLLDTYSERQIELEKKLVEIAERKKREIEIQQQLELQEETTLEIRERNVSLEQEVELKKRKLSKCYAKYLALQQELNDCKHDHNQDLRELEMAQNELVKELKRQLLIIDNFVPIEVKQRLYTQAKYDEEQEEWKFSSFPLPLPPSGGDGRQGYRRPVSHPQRRRPTSEHALQEAKSNAPSSLRFKSENIVSYELEMPCRTTQEYRTPKVSASLQAVLAQAMQTGGDDIDIVDSHTNSLRSRLENIINANSSSNGGPGSGAGPLAANTAGSGVGSMPNVRNIKSSRGLPSAGTALDSNRRPPTGRIPAKKPASAYPKARGLVNK</sequence>
<keyword id="KW-0067">ATP-binding</keyword>
<keyword id="KW-0175">Coiled coil</keyword>
<keyword id="KW-0963">Cytoplasm</keyword>
<keyword id="KW-0206">Cytoskeleton</keyword>
<keyword id="KW-0493">Microtubule</keyword>
<keyword id="KW-0505">Motor protein</keyword>
<keyword id="KW-0547">Nucleotide-binding</keyword>
<keyword id="KW-1185">Reference proteome</keyword>
<gene>
    <name evidence="1" type="primary">Klp68D</name>
    <name type="ORF">GA20244</name>
</gene>
<evidence type="ECO:0000250" key="1">
    <source>
        <dbReference type="UniProtKB" id="P46867"/>
    </source>
</evidence>
<evidence type="ECO:0000255" key="2"/>
<evidence type="ECO:0000255" key="3">
    <source>
        <dbReference type="PROSITE-ProRule" id="PRU00283"/>
    </source>
</evidence>
<evidence type="ECO:0000256" key="4">
    <source>
        <dbReference type="SAM" id="MobiDB-lite"/>
    </source>
</evidence>
<evidence type="ECO:0000305" key="5"/>
<evidence type="ECO:0000312" key="6">
    <source>
        <dbReference type="EMBL" id="EAL30282.1"/>
    </source>
</evidence>
<comment type="function">
    <text evidence="1">Plus-end directed microtubule motor that may be used for anterograde axonal transport and could conceivably move cargos in fly neurons different than those moved by kinesin heavy chain or other plus-end directed motors.</text>
</comment>
<comment type="subcellular location">
    <subcellularLocation>
        <location evidence="5">Cytoplasm</location>
        <location evidence="5">Cytoskeleton</location>
    </subcellularLocation>
</comment>
<comment type="similarity">
    <text evidence="3">Belongs to the TRAFAC class myosin-kinesin ATPase superfamily. Kinesin family. Kinesin II subfamily.</text>
</comment>
<comment type="sequence caution" evidence="5">
    <conflict type="erroneous gene model prediction">
        <sequence resource="EMBL-CDS" id="EAL30282"/>
    </conflict>
</comment>
<proteinExistence type="inferred from homology"/>
<accession>Q29DY1</accession>
<name>KLP68_DROPS</name>